<name>HSCB_SALEP</name>
<gene>
    <name evidence="1" type="primary">hscB</name>
    <name type="ordered locus">SEN2520</name>
</gene>
<accession>B5R599</accession>
<comment type="function">
    <text evidence="1">Co-chaperone involved in the maturation of iron-sulfur cluster-containing proteins. Seems to help targeting proteins to be folded toward HscA.</text>
</comment>
<comment type="subunit">
    <text evidence="1">Interacts with HscA and stimulates its ATPase activity. Interacts with IscU.</text>
</comment>
<comment type="similarity">
    <text evidence="1">Belongs to the HscB family.</text>
</comment>
<proteinExistence type="inferred from homology"/>
<reference key="1">
    <citation type="journal article" date="2008" name="Genome Res.">
        <title>Comparative genome analysis of Salmonella enteritidis PT4 and Salmonella gallinarum 287/91 provides insights into evolutionary and host adaptation pathways.</title>
        <authorList>
            <person name="Thomson N.R."/>
            <person name="Clayton D.J."/>
            <person name="Windhorst D."/>
            <person name="Vernikos G."/>
            <person name="Davidson S."/>
            <person name="Churcher C."/>
            <person name="Quail M.A."/>
            <person name="Stevens M."/>
            <person name="Jones M.A."/>
            <person name="Watson M."/>
            <person name="Barron A."/>
            <person name="Layton A."/>
            <person name="Pickard D."/>
            <person name="Kingsley R.A."/>
            <person name="Bignell A."/>
            <person name="Clark L."/>
            <person name="Harris B."/>
            <person name="Ormond D."/>
            <person name="Abdellah Z."/>
            <person name="Brooks K."/>
            <person name="Cherevach I."/>
            <person name="Chillingworth T."/>
            <person name="Woodward J."/>
            <person name="Norberczak H."/>
            <person name="Lord A."/>
            <person name="Arrowsmith C."/>
            <person name="Jagels K."/>
            <person name="Moule S."/>
            <person name="Mungall K."/>
            <person name="Saunders M."/>
            <person name="Whitehead S."/>
            <person name="Chabalgoity J.A."/>
            <person name="Maskell D."/>
            <person name="Humphreys T."/>
            <person name="Roberts M."/>
            <person name="Barrow P.A."/>
            <person name="Dougan G."/>
            <person name="Parkhill J."/>
        </authorList>
    </citation>
    <scope>NUCLEOTIDE SEQUENCE [LARGE SCALE GENOMIC DNA]</scope>
    <source>
        <strain>P125109</strain>
    </source>
</reference>
<dbReference type="EMBL" id="AM933172">
    <property type="protein sequence ID" value="CAR34103.1"/>
    <property type="molecule type" value="Genomic_DNA"/>
</dbReference>
<dbReference type="RefSeq" id="WP_000384398.1">
    <property type="nucleotide sequence ID" value="NC_011294.1"/>
</dbReference>
<dbReference type="SMR" id="B5R599"/>
<dbReference type="KEGG" id="set:SEN2520"/>
<dbReference type="HOGENOM" id="CLU_068529_2_0_6"/>
<dbReference type="Proteomes" id="UP000000613">
    <property type="component" value="Chromosome"/>
</dbReference>
<dbReference type="GO" id="GO:1990230">
    <property type="term" value="C:iron-sulfur cluster transfer complex"/>
    <property type="evidence" value="ECO:0007669"/>
    <property type="project" value="TreeGrafter"/>
</dbReference>
<dbReference type="GO" id="GO:0001671">
    <property type="term" value="F:ATPase activator activity"/>
    <property type="evidence" value="ECO:0007669"/>
    <property type="project" value="InterPro"/>
</dbReference>
<dbReference type="GO" id="GO:0051087">
    <property type="term" value="F:protein-folding chaperone binding"/>
    <property type="evidence" value="ECO:0007669"/>
    <property type="project" value="InterPro"/>
</dbReference>
<dbReference type="GO" id="GO:0044571">
    <property type="term" value="P:[2Fe-2S] cluster assembly"/>
    <property type="evidence" value="ECO:0007669"/>
    <property type="project" value="InterPro"/>
</dbReference>
<dbReference type="GO" id="GO:0051259">
    <property type="term" value="P:protein complex oligomerization"/>
    <property type="evidence" value="ECO:0007669"/>
    <property type="project" value="InterPro"/>
</dbReference>
<dbReference type="GO" id="GO:0006457">
    <property type="term" value="P:protein folding"/>
    <property type="evidence" value="ECO:0007669"/>
    <property type="project" value="UniProtKB-UniRule"/>
</dbReference>
<dbReference type="CDD" id="cd06257">
    <property type="entry name" value="DnaJ"/>
    <property type="match status" value="1"/>
</dbReference>
<dbReference type="FunFam" id="1.10.287.110:FF:000008">
    <property type="entry name" value="Co-chaperone protein HscB"/>
    <property type="match status" value="1"/>
</dbReference>
<dbReference type="FunFam" id="1.20.1280.20:FF:000001">
    <property type="entry name" value="Co-chaperone protein HscB"/>
    <property type="match status" value="1"/>
</dbReference>
<dbReference type="Gene3D" id="1.10.287.110">
    <property type="entry name" value="DnaJ domain"/>
    <property type="match status" value="1"/>
</dbReference>
<dbReference type="Gene3D" id="1.20.1280.20">
    <property type="entry name" value="HscB, C-terminal domain"/>
    <property type="match status" value="1"/>
</dbReference>
<dbReference type="HAMAP" id="MF_00682">
    <property type="entry name" value="HscB"/>
    <property type="match status" value="1"/>
</dbReference>
<dbReference type="InterPro" id="IPR001623">
    <property type="entry name" value="DnaJ_domain"/>
</dbReference>
<dbReference type="InterPro" id="IPR004640">
    <property type="entry name" value="HscB"/>
</dbReference>
<dbReference type="InterPro" id="IPR036386">
    <property type="entry name" value="HscB_C_sf"/>
</dbReference>
<dbReference type="InterPro" id="IPR009073">
    <property type="entry name" value="HscB_oligo_C"/>
</dbReference>
<dbReference type="InterPro" id="IPR036869">
    <property type="entry name" value="J_dom_sf"/>
</dbReference>
<dbReference type="NCBIfam" id="TIGR00714">
    <property type="entry name" value="hscB"/>
    <property type="match status" value="1"/>
</dbReference>
<dbReference type="NCBIfam" id="NF003449">
    <property type="entry name" value="PRK05014.1"/>
    <property type="match status" value="1"/>
</dbReference>
<dbReference type="PANTHER" id="PTHR14021">
    <property type="entry name" value="IRON-SULFUR CLUSTER CO-CHAPERONE PROTEIN HSCB"/>
    <property type="match status" value="1"/>
</dbReference>
<dbReference type="PANTHER" id="PTHR14021:SF15">
    <property type="entry name" value="IRON-SULFUR CLUSTER CO-CHAPERONE PROTEIN HSCB"/>
    <property type="match status" value="1"/>
</dbReference>
<dbReference type="Pfam" id="PF07743">
    <property type="entry name" value="HSCB_C"/>
    <property type="match status" value="1"/>
</dbReference>
<dbReference type="SMART" id="SM00271">
    <property type="entry name" value="DnaJ"/>
    <property type="match status" value="1"/>
</dbReference>
<dbReference type="SUPFAM" id="SSF46565">
    <property type="entry name" value="Chaperone J-domain"/>
    <property type="match status" value="1"/>
</dbReference>
<dbReference type="SUPFAM" id="SSF47144">
    <property type="entry name" value="HSC20 (HSCB), C-terminal oligomerisation domain"/>
    <property type="match status" value="1"/>
</dbReference>
<dbReference type="PROSITE" id="PS50076">
    <property type="entry name" value="DNAJ_2"/>
    <property type="match status" value="1"/>
</dbReference>
<protein>
    <recommendedName>
        <fullName evidence="1">Co-chaperone protein HscB</fullName>
    </recommendedName>
    <alternativeName>
        <fullName evidence="1">Hsc20</fullName>
    </alternativeName>
</protein>
<keyword id="KW-0143">Chaperone</keyword>
<sequence length="171" mass="20009">MDYFTLFGLPARYQIDTQALSLRFQDLQRQYHPDKFANGTQAQQLAAVQQSATINQAWQTLRHPLTRAEYLLSLHGFDLASEQHTVRDTAFLMEQLTLREELDDIEQSKDDVRLESFIKRVQKMFDARLQQMVEQLDNAAWDAAADTVRKLRFLDKLRSSAEQLEEKLLDF</sequence>
<evidence type="ECO:0000255" key="1">
    <source>
        <dbReference type="HAMAP-Rule" id="MF_00682"/>
    </source>
</evidence>
<organism>
    <name type="scientific">Salmonella enteritidis PT4 (strain P125109)</name>
    <dbReference type="NCBI Taxonomy" id="550537"/>
    <lineage>
        <taxon>Bacteria</taxon>
        <taxon>Pseudomonadati</taxon>
        <taxon>Pseudomonadota</taxon>
        <taxon>Gammaproteobacteria</taxon>
        <taxon>Enterobacterales</taxon>
        <taxon>Enterobacteriaceae</taxon>
        <taxon>Salmonella</taxon>
    </lineage>
</organism>
<feature type="chain" id="PRO_1000131750" description="Co-chaperone protein HscB">
    <location>
        <begin position="1"/>
        <end position="171"/>
    </location>
</feature>
<feature type="domain" description="J" evidence="1">
    <location>
        <begin position="2"/>
        <end position="74"/>
    </location>
</feature>